<dbReference type="EMBL" id="AL596166">
    <property type="protein sequence ID" value="CAC95952.1"/>
    <property type="molecule type" value="Genomic_DNA"/>
</dbReference>
<dbReference type="PIR" id="AH1522">
    <property type="entry name" value="AH1522"/>
</dbReference>
<dbReference type="RefSeq" id="WP_003724447.1">
    <property type="nucleotide sequence ID" value="NC_003212.1"/>
</dbReference>
<dbReference type="SMR" id="Q92DU2"/>
<dbReference type="STRING" id="272626.gene:17565047"/>
<dbReference type="GeneID" id="93234169"/>
<dbReference type="KEGG" id="lin:lin0720"/>
<dbReference type="eggNOG" id="COG1677">
    <property type="taxonomic scope" value="Bacteria"/>
</dbReference>
<dbReference type="HOGENOM" id="CLU_184999_0_0_9"/>
<dbReference type="OrthoDB" id="2877539at2"/>
<dbReference type="Proteomes" id="UP000002513">
    <property type="component" value="Chromosome"/>
</dbReference>
<dbReference type="GO" id="GO:0009425">
    <property type="term" value="C:bacterial-type flagellum basal body"/>
    <property type="evidence" value="ECO:0007669"/>
    <property type="project" value="UniProtKB-SubCell"/>
</dbReference>
<dbReference type="GO" id="GO:0003774">
    <property type="term" value="F:cytoskeletal motor activity"/>
    <property type="evidence" value="ECO:0007669"/>
    <property type="project" value="InterPro"/>
</dbReference>
<dbReference type="GO" id="GO:0005198">
    <property type="term" value="F:structural molecule activity"/>
    <property type="evidence" value="ECO:0007669"/>
    <property type="project" value="InterPro"/>
</dbReference>
<dbReference type="GO" id="GO:0071973">
    <property type="term" value="P:bacterial-type flagellum-dependent cell motility"/>
    <property type="evidence" value="ECO:0007669"/>
    <property type="project" value="InterPro"/>
</dbReference>
<dbReference type="HAMAP" id="MF_00724">
    <property type="entry name" value="FliE"/>
    <property type="match status" value="1"/>
</dbReference>
<dbReference type="InterPro" id="IPR001624">
    <property type="entry name" value="FliE"/>
</dbReference>
<dbReference type="NCBIfam" id="NF002466">
    <property type="entry name" value="PRK01699.1"/>
    <property type="match status" value="1"/>
</dbReference>
<dbReference type="PANTHER" id="PTHR34653">
    <property type="match status" value="1"/>
</dbReference>
<dbReference type="PANTHER" id="PTHR34653:SF1">
    <property type="entry name" value="FLAGELLAR HOOK-BASAL BODY COMPLEX PROTEIN FLIE"/>
    <property type="match status" value="1"/>
</dbReference>
<dbReference type="Pfam" id="PF02049">
    <property type="entry name" value="FliE"/>
    <property type="match status" value="1"/>
</dbReference>
<dbReference type="PRINTS" id="PR01006">
    <property type="entry name" value="FLGHOOKFLIE"/>
</dbReference>
<evidence type="ECO:0000255" key="1">
    <source>
        <dbReference type="HAMAP-Rule" id="MF_00724"/>
    </source>
</evidence>
<evidence type="ECO:0000256" key="2">
    <source>
        <dbReference type="SAM" id="MobiDB-lite"/>
    </source>
</evidence>
<keyword id="KW-0975">Bacterial flagellum</keyword>
<accession>Q92DU2</accession>
<proteinExistence type="inferred from homology"/>
<name>FLIE_LISIN</name>
<comment type="subcellular location">
    <subcellularLocation>
        <location evidence="1">Bacterial flagellum basal body</location>
    </subcellularLocation>
</comment>
<comment type="similarity">
    <text evidence="1">Belongs to the FliE family.</text>
</comment>
<gene>
    <name evidence="1" type="primary">fliE</name>
    <name type="ordered locus">lin0720</name>
</gene>
<feature type="chain" id="PRO_0000105550" description="Flagellar hook-basal body complex protein FliE">
    <location>
        <begin position="1"/>
        <end position="98"/>
    </location>
</feature>
<feature type="region of interest" description="Disordered" evidence="2">
    <location>
        <begin position="22"/>
        <end position="56"/>
    </location>
</feature>
<feature type="compositionally biased region" description="Polar residues" evidence="2">
    <location>
        <begin position="23"/>
        <end position="56"/>
    </location>
</feature>
<organism>
    <name type="scientific">Listeria innocua serovar 6a (strain ATCC BAA-680 / CLIP 11262)</name>
    <dbReference type="NCBI Taxonomy" id="272626"/>
    <lineage>
        <taxon>Bacteria</taxon>
        <taxon>Bacillati</taxon>
        <taxon>Bacillota</taxon>
        <taxon>Bacilli</taxon>
        <taxon>Bacillales</taxon>
        <taxon>Listeriaceae</taxon>
        <taxon>Listeria</taxon>
    </lineage>
</organism>
<protein>
    <recommendedName>
        <fullName evidence="1">Flagellar hook-basal body complex protein FliE</fullName>
    </recommendedName>
</protein>
<sequence length="98" mass="10385">MAIESINAASVLPKVTLGETAKTDNATGAGNTFTQMLDSMSDTQSNAQTSVSNLLTTGEGNASDVLIQMKKAESEMKTAAVIRDNVIESYKQLLNMQV</sequence>
<reference key="1">
    <citation type="journal article" date="2001" name="Science">
        <title>Comparative genomics of Listeria species.</title>
        <authorList>
            <person name="Glaser P."/>
            <person name="Frangeul L."/>
            <person name="Buchrieser C."/>
            <person name="Rusniok C."/>
            <person name="Amend A."/>
            <person name="Baquero F."/>
            <person name="Berche P."/>
            <person name="Bloecker H."/>
            <person name="Brandt P."/>
            <person name="Chakraborty T."/>
            <person name="Charbit A."/>
            <person name="Chetouani F."/>
            <person name="Couve E."/>
            <person name="de Daruvar A."/>
            <person name="Dehoux P."/>
            <person name="Domann E."/>
            <person name="Dominguez-Bernal G."/>
            <person name="Duchaud E."/>
            <person name="Durant L."/>
            <person name="Dussurget O."/>
            <person name="Entian K.-D."/>
            <person name="Fsihi H."/>
            <person name="Garcia-del Portillo F."/>
            <person name="Garrido P."/>
            <person name="Gautier L."/>
            <person name="Goebel W."/>
            <person name="Gomez-Lopez N."/>
            <person name="Hain T."/>
            <person name="Hauf J."/>
            <person name="Jackson D."/>
            <person name="Jones L.-M."/>
            <person name="Kaerst U."/>
            <person name="Kreft J."/>
            <person name="Kuhn M."/>
            <person name="Kunst F."/>
            <person name="Kurapkat G."/>
            <person name="Madueno E."/>
            <person name="Maitournam A."/>
            <person name="Mata Vicente J."/>
            <person name="Ng E."/>
            <person name="Nedjari H."/>
            <person name="Nordsiek G."/>
            <person name="Novella S."/>
            <person name="de Pablos B."/>
            <person name="Perez-Diaz J.-C."/>
            <person name="Purcell R."/>
            <person name="Remmel B."/>
            <person name="Rose M."/>
            <person name="Schlueter T."/>
            <person name="Simoes N."/>
            <person name="Tierrez A."/>
            <person name="Vazquez-Boland J.-A."/>
            <person name="Voss H."/>
            <person name="Wehland J."/>
            <person name="Cossart P."/>
        </authorList>
    </citation>
    <scope>NUCLEOTIDE SEQUENCE [LARGE SCALE GENOMIC DNA]</scope>
    <source>
        <strain>ATCC BAA-680 / CLIP 11262</strain>
    </source>
</reference>